<proteinExistence type="inferred from homology"/>
<dbReference type="EMBL" id="CP000111">
    <property type="protein sequence ID" value="ABB50608.1"/>
    <property type="molecule type" value="Genomic_DNA"/>
</dbReference>
<dbReference type="RefSeq" id="WP_002805169.1">
    <property type="nucleotide sequence ID" value="NC_007577.1"/>
</dbReference>
<dbReference type="SMR" id="Q318T7"/>
<dbReference type="STRING" id="74546.PMT9312_1548"/>
<dbReference type="GeneID" id="60201071"/>
<dbReference type="KEGG" id="pmi:PMT9312_1548"/>
<dbReference type="eggNOG" id="COG0636">
    <property type="taxonomic scope" value="Bacteria"/>
</dbReference>
<dbReference type="HOGENOM" id="CLU_148047_2_0_3"/>
<dbReference type="OrthoDB" id="9810379at2"/>
<dbReference type="Proteomes" id="UP000002715">
    <property type="component" value="Chromosome"/>
</dbReference>
<dbReference type="GO" id="GO:0031676">
    <property type="term" value="C:plasma membrane-derived thylakoid membrane"/>
    <property type="evidence" value="ECO:0007669"/>
    <property type="project" value="UniProtKB-SubCell"/>
</dbReference>
<dbReference type="GO" id="GO:0045259">
    <property type="term" value="C:proton-transporting ATP synthase complex"/>
    <property type="evidence" value="ECO:0007669"/>
    <property type="project" value="UniProtKB-KW"/>
</dbReference>
<dbReference type="GO" id="GO:0033177">
    <property type="term" value="C:proton-transporting two-sector ATPase complex, proton-transporting domain"/>
    <property type="evidence" value="ECO:0007669"/>
    <property type="project" value="InterPro"/>
</dbReference>
<dbReference type="GO" id="GO:0008289">
    <property type="term" value="F:lipid binding"/>
    <property type="evidence" value="ECO:0007669"/>
    <property type="project" value="UniProtKB-KW"/>
</dbReference>
<dbReference type="GO" id="GO:0046933">
    <property type="term" value="F:proton-transporting ATP synthase activity, rotational mechanism"/>
    <property type="evidence" value="ECO:0007669"/>
    <property type="project" value="UniProtKB-UniRule"/>
</dbReference>
<dbReference type="CDD" id="cd18183">
    <property type="entry name" value="ATP-synt_Fo_c_ATPH"/>
    <property type="match status" value="1"/>
</dbReference>
<dbReference type="FunFam" id="1.20.20.10:FF:000001">
    <property type="entry name" value="ATP synthase subunit c, chloroplastic"/>
    <property type="match status" value="1"/>
</dbReference>
<dbReference type="Gene3D" id="1.20.20.10">
    <property type="entry name" value="F1F0 ATP synthase subunit C"/>
    <property type="match status" value="1"/>
</dbReference>
<dbReference type="HAMAP" id="MF_01396">
    <property type="entry name" value="ATP_synth_c_bact"/>
    <property type="match status" value="1"/>
</dbReference>
<dbReference type="InterPro" id="IPR005953">
    <property type="entry name" value="ATP_synth_csu_bac/chlpt"/>
</dbReference>
<dbReference type="InterPro" id="IPR000454">
    <property type="entry name" value="ATP_synth_F0_csu"/>
</dbReference>
<dbReference type="InterPro" id="IPR020537">
    <property type="entry name" value="ATP_synth_F0_csu_DDCD_BS"/>
</dbReference>
<dbReference type="InterPro" id="IPR038662">
    <property type="entry name" value="ATP_synth_F0_csu_sf"/>
</dbReference>
<dbReference type="InterPro" id="IPR002379">
    <property type="entry name" value="ATPase_proteolipid_c-like_dom"/>
</dbReference>
<dbReference type="InterPro" id="IPR035921">
    <property type="entry name" value="F/V-ATP_Csub_sf"/>
</dbReference>
<dbReference type="NCBIfam" id="TIGR01260">
    <property type="entry name" value="ATP_synt_c"/>
    <property type="match status" value="1"/>
</dbReference>
<dbReference type="NCBIfam" id="NF005608">
    <property type="entry name" value="PRK07354.1"/>
    <property type="match status" value="1"/>
</dbReference>
<dbReference type="PANTHER" id="PTHR10031">
    <property type="entry name" value="ATP SYNTHASE LIPID-BINDING PROTEIN, MITOCHONDRIAL"/>
    <property type="match status" value="1"/>
</dbReference>
<dbReference type="PANTHER" id="PTHR10031:SF0">
    <property type="entry name" value="ATPASE PROTEIN 9"/>
    <property type="match status" value="1"/>
</dbReference>
<dbReference type="Pfam" id="PF00137">
    <property type="entry name" value="ATP-synt_C"/>
    <property type="match status" value="1"/>
</dbReference>
<dbReference type="PRINTS" id="PR00124">
    <property type="entry name" value="ATPASEC"/>
</dbReference>
<dbReference type="SUPFAM" id="SSF81333">
    <property type="entry name" value="F1F0 ATP synthase subunit C"/>
    <property type="match status" value="1"/>
</dbReference>
<dbReference type="PROSITE" id="PS00605">
    <property type="entry name" value="ATPASE_C"/>
    <property type="match status" value="1"/>
</dbReference>
<evidence type="ECO:0000255" key="1">
    <source>
        <dbReference type="HAMAP-Rule" id="MF_01396"/>
    </source>
</evidence>
<gene>
    <name evidence="1" type="primary">atpE</name>
    <name evidence="1" type="synonym">atpH</name>
    <name type="ordered locus">PMT9312_1548</name>
</gene>
<comment type="function">
    <text evidence="1">F(1)F(0) ATP synthase produces ATP from ADP in the presence of a proton or sodium gradient. F-type ATPases consist of two structural domains, F(1) containing the extramembraneous catalytic core and F(0) containing the membrane proton channel, linked together by a central stalk and a peripheral stalk. During catalysis, ATP synthesis in the catalytic domain of F(1) is coupled via a rotary mechanism of the central stalk subunits to proton translocation.</text>
</comment>
<comment type="function">
    <text evidence="1">Key component of the F(0) channel; it plays a direct role in translocation across the membrane. A homomeric c-ring of between 10-14 subunits forms the central stalk rotor element with the F(1) delta and epsilon subunits.</text>
</comment>
<comment type="subunit">
    <text evidence="1">F-type ATPases have 2 components, F(1) - the catalytic core - and F(0) - the membrane proton channel. F(1) has five subunits: alpha(3), beta(3), gamma(1), delta(1), epsilon(1). F(0) has four main subunits: a(1), b(1), b'(1) and c(10-14). The alpha and beta chains form an alternating ring which encloses part of the gamma chain. F(1) is attached to F(0) by a central stalk formed by the gamma and epsilon chains, while a peripheral stalk is formed by the delta, b and b' chains.</text>
</comment>
<comment type="subcellular location">
    <subcellularLocation>
        <location evidence="1">Cellular thylakoid membrane</location>
        <topology evidence="1">Multi-pass membrane protein</topology>
    </subcellularLocation>
</comment>
<comment type="similarity">
    <text evidence="1">Belongs to the ATPase C chain family.</text>
</comment>
<name>ATPL_PROM9</name>
<organism>
    <name type="scientific">Prochlorococcus marinus (strain MIT 9312)</name>
    <dbReference type="NCBI Taxonomy" id="74546"/>
    <lineage>
        <taxon>Bacteria</taxon>
        <taxon>Bacillati</taxon>
        <taxon>Cyanobacteriota</taxon>
        <taxon>Cyanophyceae</taxon>
        <taxon>Synechococcales</taxon>
        <taxon>Prochlorococcaceae</taxon>
        <taxon>Prochlorococcus</taxon>
    </lineage>
</organism>
<accession>Q318T7</accession>
<protein>
    <recommendedName>
        <fullName evidence="1">ATP synthase subunit c</fullName>
    </recommendedName>
    <alternativeName>
        <fullName evidence="1">ATP synthase F(0) sector subunit c</fullName>
    </alternativeName>
    <alternativeName>
        <fullName evidence="1">F-type ATPase subunit c</fullName>
        <shortName evidence="1">F-ATPase subunit c</shortName>
    </alternativeName>
    <alternativeName>
        <fullName evidence="1">Lipid-binding protein</fullName>
    </alternativeName>
</protein>
<sequence length="81" mass="8018">MDSITSAASVVAAGLAVGLGAIGPGLGQGNAAQGAVEGIARQPEAEGKIRGTLLLSFAFMESLTIYGLVVALVLLFANPFS</sequence>
<feature type="chain" id="PRO_5000102638" description="ATP synthase subunit c">
    <location>
        <begin position="1"/>
        <end position="81"/>
    </location>
</feature>
<feature type="transmembrane region" description="Helical" evidence="1">
    <location>
        <begin position="7"/>
        <end position="27"/>
    </location>
</feature>
<feature type="transmembrane region" description="Helical" evidence="1">
    <location>
        <begin position="57"/>
        <end position="77"/>
    </location>
</feature>
<feature type="site" description="Reversibly protonated during proton transport" evidence="1">
    <location>
        <position position="61"/>
    </location>
</feature>
<keyword id="KW-0066">ATP synthesis</keyword>
<keyword id="KW-0138">CF(0)</keyword>
<keyword id="KW-0375">Hydrogen ion transport</keyword>
<keyword id="KW-0406">Ion transport</keyword>
<keyword id="KW-0446">Lipid-binding</keyword>
<keyword id="KW-0472">Membrane</keyword>
<keyword id="KW-0793">Thylakoid</keyword>
<keyword id="KW-0812">Transmembrane</keyword>
<keyword id="KW-1133">Transmembrane helix</keyword>
<keyword id="KW-0813">Transport</keyword>
<reference key="1">
    <citation type="journal article" date="2006" name="Science">
        <title>Genomic islands and the ecology and evolution of Prochlorococcus.</title>
        <authorList>
            <person name="Coleman M.L."/>
            <person name="Sullivan M.B."/>
            <person name="Martiny A.C."/>
            <person name="Steglich C."/>
            <person name="Barry K."/>
            <person name="Delong E.F."/>
            <person name="Chisholm S.W."/>
        </authorList>
    </citation>
    <scope>NUCLEOTIDE SEQUENCE [LARGE SCALE GENOMIC DNA]</scope>
    <source>
        <strain>MIT 9312</strain>
    </source>
</reference>